<dbReference type="EC" id="3.5.2.9" evidence="1"/>
<dbReference type="EMBL" id="CP000958">
    <property type="protein sequence ID" value="ACA92216.1"/>
    <property type="molecule type" value="Genomic_DNA"/>
</dbReference>
<dbReference type="RefSeq" id="WP_012329398.1">
    <property type="nucleotide sequence ID" value="NC_010508.1"/>
</dbReference>
<dbReference type="SMR" id="B1K0B1"/>
<dbReference type="GeneID" id="83049838"/>
<dbReference type="KEGG" id="bcm:Bcenmc03_3058"/>
<dbReference type="HOGENOM" id="CLU_069535_0_0_4"/>
<dbReference type="Proteomes" id="UP000002169">
    <property type="component" value="Chromosome 1"/>
</dbReference>
<dbReference type="GO" id="GO:0017168">
    <property type="term" value="F:5-oxoprolinase (ATP-hydrolyzing) activity"/>
    <property type="evidence" value="ECO:0007669"/>
    <property type="project" value="UniProtKB-UniRule"/>
</dbReference>
<dbReference type="GO" id="GO:0005524">
    <property type="term" value="F:ATP binding"/>
    <property type="evidence" value="ECO:0007669"/>
    <property type="project" value="UniProtKB-UniRule"/>
</dbReference>
<dbReference type="GO" id="GO:0005975">
    <property type="term" value="P:carbohydrate metabolic process"/>
    <property type="evidence" value="ECO:0007669"/>
    <property type="project" value="InterPro"/>
</dbReference>
<dbReference type="CDD" id="cd10800">
    <property type="entry name" value="LamB_YcsF_YbgL_like"/>
    <property type="match status" value="1"/>
</dbReference>
<dbReference type="Gene3D" id="3.20.20.370">
    <property type="entry name" value="Glycoside hydrolase/deacetylase"/>
    <property type="match status" value="1"/>
</dbReference>
<dbReference type="HAMAP" id="MF_00691">
    <property type="entry name" value="PxpA"/>
    <property type="match status" value="1"/>
</dbReference>
<dbReference type="InterPro" id="IPR011330">
    <property type="entry name" value="Glyco_hydro/deAcase_b/a-brl"/>
</dbReference>
<dbReference type="InterPro" id="IPR005501">
    <property type="entry name" value="LamB/YcsF/PxpA-like"/>
</dbReference>
<dbReference type="NCBIfam" id="NF003814">
    <property type="entry name" value="PRK05406.1-3"/>
    <property type="match status" value="1"/>
</dbReference>
<dbReference type="NCBIfam" id="NF003815">
    <property type="entry name" value="PRK05406.1-4"/>
    <property type="match status" value="1"/>
</dbReference>
<dbReference type="NCBIfam" id="NF003816">
    <property type="entry name" value="PRK05406.1-5"/>
    <property type="match status" value="1"/>
</dbReference>
<dbReference type="PANTHER" id="PTHR30292:SF0">
    <property type="entry name" value="5-OXOPROLINASE SUBUNIT A"/>
    <property type="match status" value="1"/>
</dbReference>
<dbReference type="PANTHER" id="PTHR30292">
    <property type="entry name" value="UNCHARACTERIZED PROTEIN YBGL-RELATED"/>
    <property type="match status" value="1"/>
</dbReference>
<dbReference type="Pfam" id="PF03746">
    <property type="entry name" value="LamB_YcsF"/>
    <property type="match status" value="1"/>
</dbReference>
<dbReference type="SUPFAM" id="SSF88713">
    <property type="entry name" value="Glycoside hydrolase/deacetylase"/>
    <property type="match status" value="1"/>
</dbReference>
<keyword id="KW-0067">ATP-binding</keyword>
<keyword id="KW-0378">Hydrolase</keyword>
<keyword id="KW-0547">Nucleotide-binding</keyword>
<evidence type="ECO:0000255" key="1">
    <source>
        <dbReference type="HAMAP-Rule" id="MF_00691"/>
    </source>
</evidence>
<proteinExistence type="inferred from homology"/>
<protein>
    <recommendedName>
        <fullName evidence="1">5-oxoprolinase subunit A</fullName>
        <shortName evidence="1">5-OPase subunit A</shortName>
        <ecNumber evidence="1">3.5.2.9</ecNumber>
    </recommendedName>
    <alternativeName>
        <fullName evidence="1">5-oxoprolinase (ATP-hydrolyzing) subunit A</fullName>
    </alternativeName>
</protein>
<accession>B1K0B1</accession>
<organism>
    <name type="scientific">Burkholderia orbicola (strain MC0-3)</name>
    <dbReference type="NCBI Taxonomy" id="406425"/>
    <lineage>
        <taxon>Bacteria</taxon>
        <taxon>Pseudomonadati</taxon>
        <taxon>Pseudomonadota</taxon>
        <taxon>Betaproteobacteria</taxon>
        <taxon>Burkholderiales</taxon>
        <taxon>Burkholderiaceae</taxon>
        <taxon>Burkholderia</taxon>
        <taxon>Burkholderia cepacia complex</taxon>
        <taxon>Burkholderia orbicola</taxon>
    </lineage>
</organism>
<gene>
    <name evidence="1" type="primary">pxpA</name>
    <name type="ordered locus">Bcenmc03_3058</name>
</gene>
<feature type="chain" id="PRO_1000132043" description="5-oxoprolinase subunit A">
    <location>
        <begin position="1"/>
        <end position="254"/>
    </location>
</feature>
<sequence length="254" mass="26473">MEIDLNADLGEGCGSDEALLDLVTSANIACGWHAGGANAMRDCVRWAVQKGVSIGAHPSFHDPENFGRKEMQLPPGDIYAGVLYQLGALSAIAQAEGGRIAHVKPHGALYNQAARDPLIADAVVSAIHDFDPSLAVFGLANSVFIAAARQAGLAAVEEVFADRGYRADGSLVPRSLPGALIDDEDAVLARTLDMVRNRQVRALSGEWVPLNAQTVCLHGDGPHALAFAKRIRAALEAAGVDVVAPGALQADEGA</sequence>
<comment type="function">
    <text evidence="1">Catalyzes the cleavage of 5-oxoproline to form L-glutamate coupled to the hydrolysis of ATP to ADP and inorganic phosphate.</text>
</comment>
<comment type="catalytic activity">
    <reaction evidence="1">
        <text>5-oxo-L-proline + ATP + 2 H2O = L-glutamate + ADP + phosphate + H(+)</text>
        <dbReference type="Rhea" id="RHEA:10348"/>
        <dbReference type="ChEBI" id="CHEBI:15377"/>
        <dbReference type="ChEBI" id="CHEBI:15378"/>
        <dbReference type="ChEBI" id="CHEBI:29985"/>
        <dbReference type="ChEBI" id="CHEBI:30616"/>
        <dbReference type="ChEBI" id="CHEBI:43474"/>
        <dbReference type="ChEBI" id="CHEBI:58402"/>
        <dbReference type="ChEBI" id="CHEBI:456216"/>
        <dbReference type="EC" id="3.5.2.9"/>
    </reaction>
</comment>
<comment type="subunit">
    <text evidence="1">Forms a complex composed of PxpA, PxpB and PxpC.</text>
</comment>
<comment type="similarity">
    <text evidence="1">Belongs to the LamB/PxpA family.</text>
</comment>
<name>PXPA_BURO0</name>
<reference key="1">
    <citation type="submission" date="2008-02" db="EMBL/GenBank/DDBJ databases">
        <title>Complete sequence of chromosome 1 of Burkholderia cenocepacia MC0-3.</title>
        <authorList>
            <person name="Copeland A."/>
            <person name="Lucas S."/>
            <person name="Lapidus A."/>
            <person name="Barry K."/>
            <person name="Bruce D."/>
            <person name="Goodwin L."/>
            <person name="Glavina del Rio T."/>
            <person name="Dalin E."/>
            <person name="Tice H."/>
            <person name="Pitluck S."/>
            <person name="Chain P."/>
            <person name="Malfatti S."/>
            <person name="Shin M."/>
            <person name="Vergez L."/>
            <person name="Schmutz J."/>
            <person name="Larimer F."/>
            <person name="Land M."/>
            <person name="Hauser L."/>
            <person name="Kyrpides N."/>
            <person name="Mikhailova N."/>
            <person name="Tiedje J."/>
            <person name="Richardson P."/>
        </authorList>
    </citation>
    <scope>NUCLEOTIDE SEQUENCE [LARGE SCALE GENOMIC DNA]</scope>
    <source>
        <strain>MC0-3</strain>
    </source>
</reference>